<comment type="function">
    <text evidence="3">Ion channel inhibitor.</text>
</comment>
<comment type="subcellular location">
    <subcellularLocation>
        <location evidence="1">Secreted</location>
    </subcellularLocation>
</comment>
<comment type="tissue specificity">
    <text>Expressed by the venom gland.</text>
</comment>
<comment type="domain">
    <text evidence="1">The presence of a 'disulfide through disulfide knot' structurally defines this protein as a knottin.</text>
</comment>
<comment type="similarity">
    <text evidence="3">Belongs to the neurotoxin 14 (magi-1) family. 05 (ICK-7) subfamily. ICK-7 sub-subfamily.</text>
</comment>
<protein>
    <recommendedName>
        <fullName>U13-barytoxin-Tl1a</fullName>
        <shortName>U13-BATX-Tl1a</shortName>
    </recommendedName>
    <alternativeName>
        <fullName>Toxin ICK-7</fullName>
    </alternativeName>
</protein>
<evidence type="ECO:0000250" key="1"/>
<evidence type="ECO:0000255" key="2"/>
<evidence type="ECO:0000305" key="3"/>
<name>ICK7_TRILK</name>
<dbReference type="EMBL" id="GAQE01000010">
    <property type="protein sequence ID" value="JAB84544.1"/>
    <property type="molecule type" value="Transcribed_RNA"/>
</dbReference>
<dbReference type="ArachnoServer" id="AS001566">
    <property type="toxin name" value="U13-barytoxin-Tl1a"/>
</dbReference>
<dbReference type="GO" id="GO:0005576">
    <property type="term" value="C:extracellular region"/>
    <property type="evidence" value="ECO:0007669"/>
    <property type="project" value="UniProtKB-SubCell"/>
</dbReference>
<dbReference type="GO" id="GO:0019871">
    <property type="term" value="F:sodium channel inhibitor activity"/>
    <property type="evidence" value="ECO:0007669"/>
    <property type="project" value="InterPro"/>
</dbReference>
<dbReference type="GO" id="GO:0090729">
    <property type="term" value="F:toxin activity"/>
    <property type="evidence" value="ECO:0007669"/>
    <property type="project" value="UniProtKB-KW"/>
</dbReference>
<dbReference type="InterPro" id="IPR012627">
    <property type="entry name" value="Toxin_22"/>
</dbReference>
<dbReference type="Pfam" id="PF08092">
    <property type="entry name" value="Toxin_22"/>
    <property type="match status" value="1"/>
</dbReference>
<keyword id="KW-0165">Cleavage on pair of basic residues</keyword>
<keyword id="KW-1015">Disulfide bond</keyword>
<keyword id="KW-0872">Ion channel impairing toxin</keyword>
<keyword id="KW-0960">Knottin</keyword>
<keyword id="KW-0964">Secreted</keyword>
<keyword id="KW-0732">Signal</keyword>
<keyword id="KW-0800">Toxin</keyword>
<reference key="1">
    <citation type="journal article" date="2013" name="Toxins">
        <title>A proteomics and transcriptomics investigation of the venom from the barychelid spider Trittame loki (brush-foot trapdoor).</title>
        <authorList>
            <person name="Undheim E.A."/>
            <person name="Sunagar K."/>
            <person name="Herzig V."/>
            <person name="Kely L."/>
            <person name="Low D.H."/>
            <person name="Jackson T.N."/>
            <person name="Jones A."/>
            <person name="Kurniawan N."/>
            <person name="King G.F."/>
            <person name="Ali S.A."/>
            <person name="Antunes A."/>
            <person name="Ruder T."/>
            <person name="Fry B.G."/>
        </authorList>
    </citation>
    <scope>NUCLEOTIDE SEQUENCE [MRNA]</scope>
    <source>
        <tissue>Venom gland</tissue>
    </source>
</reference>
<proteinExistence type="evidence at transcript level"/>
<accession>W4VRY7</accession>
<feature type="signal peptide" evidence="2">
    <location>
        <begin position="1"/>
        <end position="20"/>
    </location>
</feature>
<feature type="chain" id="PRO_0000429214" description="U13-barytoxin-Tl1a">
    <location>
        <begin position="21"/>
        <end position="120"/>
    </location>
</feature>
<feature type="disulfide bond" evidence="1">
    <location>
        <begin position="75"/>
        <end position="90"/>
    </location>
</feature>
<feature type="disulfide bond" evidence="1">
    <location>
        <begin position="82"/>
        <end position="95"/>
    </location>
</feature>
<feature type="disulfide bond" evidence="1">
    <location>
        <begin position="89"/>
        <end position="109"/>
    </location>
</feature>
<sequence>MKTIIVFLSLLVLATKFGDAKEGVNQEQKKEVTQNEFRVEYLNEMAAMSLLQQLEAXESALFEKEAGRNSRQXRCAMGDVPCTKGKTNCCKGYECKPKSPSWWYDTDFCQPIHGGRPIGI</sequence>
<organism>
    <name type="scientific">Trittame loki</name>
    <name type="common">Brush-footed trapdoor spider</name>
    <dbReference type="NCBI Taxonomy" id="1295018"/>
    <lineage>
        <taxon>Eukaryota</taxon>
        <taxon>Metazoa</taxon>
        <taxon>Ecdysozoa</taxon>
        <taxon>Arthropoda</taxon>
        <taxon>Chelicerata</taxon>
        <taxon>Arachnida</taxon>
        <taxon>Araneae</taxon>
        <taxon>Mygalomorphae</taxon>
        <taxon>Barychelidae</taxon>
        <taxon>Trittame</taxon>
    </lineage>
</organism>